<gene>
    <name evidence="1" type="primary">tig</name>
    <name type="ordered locus">LACR_0550</name>
</gene>
<keyword id="KW-0131">Cell cycle</keyword>
<keyword id="KW-0132">Cell division</keyword>
<keyword id="KW-0143">Chaperone</keyword>
<keyword id="KW-0963">Cytoplasm</keyword>
<keyword id="KW-0413">Isomerase</keyword>
<keyword id="KW-0697">Rotamase</keyword>
<accession>Q031H9</accession>
<evidence type="ECO:0000255" key="1">
    <source>
        <dbReference type="HAMAP-Rule" id="MF_00303"/>
    </source>
</evidence>
<reference key="1">
    <citation type="journal article" date="2006" name="Proc. Natl. Acad. Sci. U.S.A.">
        <title>Comparative genomics of the lactic acid bacteria.</title>
        <authorList>
            <person name="Makarova K.S."/>
            <person name="Slesarev A."/>
            <person name="Wolf Y.I."/>
            <person name="Sorokin A."/>
            <person name="Mirkin B."/>
            <person name="Koonin E.V."/>
            <person name="Pavlov A."/>
            <person name="Pavlova N."/>
            <person name="Karamychev V."/>
            <person name="Polouchine N."/>
            <person name="Shakhova V."/>
            <person name="Grigoriev I."/>
            <person name="Lou Y."/>
            <person name="Rohksar D."/>
            <person name="Lucas S."/>
            <person name="Huang K."/>
            <person name="Goodstein D.M."/>
            <person name="Hawkins T."/>
            <person name="Plengvidhya V."/>
            <person name="Welker D."/>
            <person name="Hughes J."/>
            <person name="Goh Y."/>
            <person name="Benson A."/>
            <person name="Baldwin K."/>
            <person name="Lee J.-H."/>
            <person name="Diaz-Muniz I."/>
            <person name="Dosti B."/>
            <person name="Smeianov V."/>
            <person name="Wechter W."/>
            <person name="Barabote R."/>
            <person name="Lorca G."/>
            <person name="Altermann E."/>
            <person name="Barrangou R."/>
            <person name="Ganesan B."/>
            <person name="Xie Y."/>
            <person name="Rawsthorne H."/>
            <person name="Tamir D."/>
            <person name="Parker C."/>
            <person name="Breidt F."/>
            <person name="Broadbent J.R."/>
            <person name="Hutkins R."/>
            <person name="O'Sullivan D."/>
            <person name="Steele J."/>
            <person name="Unlu G."/>
            <person name="Saier M.H. Jr."/>
            <person name="Klaenhammer T."/>
            <person name="Richardson P."/>
            <person name="Kozyavkin S."/>
            <person name="Weimer B.C."/>
            <person name="Mills D.A."/>
        </authorList>
    </citation>
    <scope>NUCLEOTIDE SEQUENCE [LARGE SCALE GENOMIC DNA]</scope>
    <source>
        <strain>SK11</strain>
    </source>
</reference>
<comment type="function">
    <text evidence="1">Involved in protein export. Acts as a chaperone by maintaining the newly synthesized protein in an open conformation. Functions as a peptidyl-prolyl cis-trans isomerase.</text>
</comment>
<comment type="catalytic activity">
    <reaction evidence="1">
        <text>[protein]-peptidylproline (omega=180) = [protein]-peptidylproline (omega=0)</text>
        <dbReference type="Rhea" id="RHEA:16237"/>
        <dbReference type="Rhea" id="RHEA-COMP:10747"/>
        <dbReference type="Rhea" id="RHEA-COMP:10748"/>
        <dbReference type="ChEBI" id="CHEBI:83833"/>
        <dbReference type="ChEBI" id="CHEBI:83834"/>
        <dbReference type="EC" id="5.2.1.8"/>
    </reaction>
</comment>
<comment type="subcellular location">
    <subcellularLocation>
        <location>Cytoplasm</location>
    </subcellularLocation>
    <text evidence="1">About half TF is bound to the ribosome near the polypeptide exit tunnel while the other half is free in the cytoplasm.</text>
</comment>
<comment type="domain">
    <text evidence="1">Consists of 3 domains; the N-terminus binds the ribosome, the middle domain has PPIase activity, while the C-terminus has intrinsic chaperone activity on its own.</text>
</comment>
<comment type="similarity">
    <text evidence="1">Belongs to the FKBP-type PPIase family. Tig subfamily.</text>
</comment>
<dbReference type="EC" id="5.2.1.8" evidence="1"/>
<dbReference type="EMBL" id="CP000425">
    <property type="protein sequence ID" value="ABJ72143.1"/>
    <property type="molecule type" value="Genomic_DNA"/>
</dbReference>
<dbReference type="RefSeq" id="WP_011675561.1">
    <property type="nucleotide sequence ID" value="NC_008527.1"/>
</dbReference>
<dbReference type="SMR" id="Q031H9"/>
<dbReference type="KEGG" id="llc:LACR_0550"/>
<dbReference type="HOGENOM" id="CLU_033058_3_2_9"/>
<dbReference type="Proteomes" id="UP000000240">
    <property type="component" value="Chromosome"/>
</dbReference>
<dbReference type="GO" id="GO:0005737">
    <property type="term" value="C:cytoplasm"/>
    <property type="evidence" value="ECO:0007669"/>
    <property type="project" value="UniProtKB-SubCell"/>
</dbReference>
<dbReference type="GO" id="GO:0003755">
    <property type="term" value="F:peptidyl-prolyl cis-trans isomerase activity"/>
    <property type="evidence" value="ECO:0007669"/>
    <property type="project" value="UniProtKB-UniRule"/>
</dbReference>
<dbReference type="GO" id="GO:0044183">
    <property type="term" value="F:protein folding chaperone"/>
    <property type="evidence" value="ECO:0007669"/>
    <property type="project" value="TreeGrafter"/>
</dbReference>
<dbReference type="GO" id="GO:0043022">
    <property type="term" value="F:ribosome binding"/>
    <property type="evidence" value="ECO:0007669"/>
    <property type="project" value="TreeGrafter"/>
</dbReference>
<dbReference type="GO" id="GO:0051083">
    <property type="term" value="P:'de novo' cotranslational protein folding"/>
    <property type="evidence" value="ECO:0007669"/>
    <property type="project" value="TreeGrafter"/>
</dbReference>
<dbReference type="GO" id="GO:0051301">
    <property type="term" value="P:cell division"/>
    <property type="evidence" value="ECO:0007669"/>
    <property type="project" value="UniProtKB-KW"/>
</dbReference>
<dbReference type="GO" id="GO:0061077">
    <property type="term" value="P:chaperone-mediated protein folding"/>
    <property type="evidence" value="ECO:0007669"/>
    <property type="project" value="TreeGrafter"/>
</dbReference>
<dbReference type="GO" id="GO:0015031">
    <property type="term" value="P:protein transport"/>
    <property type="evidence" value="ECO:0007669"/>
    <property type="project" value="UniProtKB-UniRule"/>
</dbReference>
<dbReference type="GO" id="GO:0043335">
    <property type="term" value="P:protein unfolding"/>
    <property type="evidence" value="ECO:0007669"/>
    <property type="project" value="TreeGrafter"/>
</dbReference>
<dbReference type="FunFam" id="3.10.50.40:FF:000001">
    <property type="entry name" value="Trigger factor"/>
    <property type="match status" value="1"/>
</dbReference>
<dbReference type="Gene3D" id="3.10.50.40">
    <property type="match status" value="1"/>
</dbReference>
<dbReference type="Gene3D" id="3.30.70.1050">
    <property type="entry name" value="Trigger factor ribosome-binding domain"/>
    <property type="match status" value="1"/>
</dbReference>
<dbReference type="Gene3D" id="1.10.3120.10">
    <property type="entry name" value="Trigger factor, C-terminal domain"/>
    <property type="match status" value="1"/>
</dbReference>
<dbReference type="HAMAP" id="MF_00303">
    <property type="entry name" value="Trigger_factor_Tig"/>
    <property type="match status" value="1"/>
</dbReference>
<dbReference type="InterPro" id="IPR046357">
    <property type="entry name" value="PPIase_dom_sf"/>
</dbReference>
<dbReference type="InterPro" id="IPR001179">
    <property type="entry name" value="PPIase_FKBP_dom"/>
</dbReference>
<dbReference type="InterPro" id="IPR005215">
    <property type="entry name" value="Trig_fac"/>
</dbReference>
<dbReference type="InterPro" id="IPR008880">
    <property type="entry name" value="Trigger_fac_C"/>
</dbReference>
<dbReference type="InterPro" id="IPR037041">
    <property type="entry name" value="Trigger_fac_C_sf"/>
</dbReference>
<dbReference type="InterPro" id="IPR008881">
    <property type="entry name" value="Trigger_fac_ribosome-bd_bac"/>
</dbReference>
<dbReference type="InterPro" id="IPR036611">
    <property type="entry name" value="Trigger_fac_ribosome-bd_sf"/>
</dbReference>
<dbReference type="InterPro" id="IPR027304">
    <property type="entry name" value="Trigger_fact/SurA_dom_sf"/>
</dbReference>
<dbReference type="NCBIfam" id="TIGR00115">
    <property type="entry name" value="tig"/>
    <property type="match status" value="1"/>
</dbReference>
<dbReference type="PANTHER" id="PTHR30560">
    <property type="entry name" value="TRIGGER FACTOR CHAPERONE AND PEPTIDYL-PROLYL CIS/TRANS ISOMERASE"/>
    <property type="match status" value="1"/>
</dbReference>
<dbReference type="PANTHER" id="PTHR30560:SF3">
    <property type="entry name" value="TRIGGER FACTOR-LIKE PROTEIN TIG, CHLOROPLASTIC"/>
    <property type="match status" value="1"/>
</dbReference>
<dbReference type="Pfam" id="PF00254">
    <property type="entry name" value="FKBP_C"/>
    <property type="match status" value="1"/>
</dbReference>
<dbReference type="Pfam" id="PF05698">
    <property type="entry name" value="Trigger_C"/>
    <property type="match status" value="1"/>
</dbReference>
<dbReference type="Pfam" id="PF05697">
    <property type="entry name" value="Trigger_N"/>
    <property type="match status" value="1"/>
</dbReference>
<dbReference type="PIRSF" id="PIRSF003095">
    <property type="entry name" value="Trigger_factor"/>
    <property type="match status" value="1"/>
</dbReference>
<dbReference type="SUPFAM" id="SSF54534">
    <property type="entry name" value="FKBP-like"/>
    <property type="match status" value="1"/>
</dbReference>
<dbReference type="SUPFAM" id="SSF109998">
    <property type="entry name" value="Triger factor/SurA peptide-binding domain-like"/>
    <property type="match status" value="1"/>
</dbReference>
<dbReference type="SUPFAM" id="SSF102735">
    <property type="entry name" value="Trigger factor ribosome-binding domain"/>
    <property type="match status" value="1"/>
</dbReference>
<dbReference type="PROSITE" id="PS50059">
    <property type="entry name" value="FKBP_PPIASE"/>
    <property type="match status" value="1"/>
</dbReference>
<organism>
    <name type="scientific">Lactococcus lactis subsp. cremoris (strain SK11)</name>
    <dbReference type="NCBI Taxonomy" id="272622"/>
    <lineage>
        <taxon>Bacteria</taxon>
        <taxon>Bacillati</taxon>
        <taxon>Bacillota</taxon>
        <taxon>Bacilli</taxon>
        <taxon>Lactobacillales</taxon>
        <taxon>Streptococcaceae</taxon>
        <taxon>Lactococcus</taxon>
        <taxon>Lactococcus cremoris subsp. cremoris</taxon>
    </lineage>
</organism>
<proteinExistence type="inferred from homology"/>
<protein>
    <recommendedName>
        <fullName evidence="1">Trigger factor</fullName>
        <shortName evidence="1">TF</shortName>
        <ecNumber evidence="1">5.2.1.8</ecNumber>
    </recommendedName>
    <alternativeName>
        <fullName evidence="1">PPIase</fullName>
    </alternativeName>
</protein>
<name>TIG_LACLS</name>
<feature type="chain" id="PRO_1000022699" description="Trigger factor">
    <location>
        <begin position="1"/>
        <end position="427"/>
    </location>
</feature>
<feature type="domain" description="PPIase FKBP-type" evidence="1">
    <location>
        <begin position="163"/>
        <end position="248"/>
    </location>
</feature>
<sequence>MTVSFEKTSDTKGTLSFSIDQETIKTGLDKAFNKVKANISVPGFRKGKISRQMFNKMYGEEALFEEALNAVLPTAYDAAVKEAAIEPVAQPKIDVAKMEKGSDWELTAEVVVKPTITLGDYKDLTVEVDATKEVTDEEVETRLTNAQNNLAELVVKETAAENGDTVVIDFVGSVDGVEFEGGKGSNHSLELGSGQFIPGFEEQLVGTKSGETVEVKVTFPENYQAEDLAGKEALFVTTVNEVKAKELPELDDELAKDIDEEVETLEELKAKFRKELEESKSEAYDDAVETAAIEAAVANAEIKEIPEEMIHEEVHRAMNEFLGGMQQQGISPEMYFQITGTSEDDLHKQYEADADKRVRTNLVIEAIAAAESFTTSDEEVKAEIEDLAGQYNMPVEQVEKLLPVDMLKHDIAMKKAVEVIATTAKVK</sequence>